<accession>A8F3G2</accession>
<name>RIMM_PSELT</name>
<feature type="chain" id="PRO_1000057122" description="Ribosome maturation factor RimM">
    <location>
        <begin position="1"/>
        <end position="168"/>
    </location>
</feature>
<feature type="domain" description="PRC barrel" evidence="1">
    <location>
        <begin position="97"/>
        <end position="168"/>
    </location>
</feature>
<gene>
    <name evidence="1" type="primary">rimM</name>
    <name type="ordered locus">Tlet_0126</name>
</gene>
<reference key="1">
    <citation type="submission" date="2007-08" db="EMBL/GenBank/DDBJ databases">
        <title>Complete sequence of Thermotoga lettingae TMO.</title>
        <authorList>
            <consortium name="US DOE Joint Genome Institute"/>
            <person name="Copeland A."/>
            <person name="Lucas S."/>
            <person name="Lapidus A."/>
            <person name="Barry K."/>
            <person name="Glavina del Rio T."/>
            <person name="Dalin E."/>
            <person name="Tice H."/>
            <person name="Pitluck S."/>
            <person name="Foster B."/>
            <person name="Bruce D."/>
            <person name="Schmutz J."/>
            <person name="Larimer F."/>
            <person name="Land M."/>
            <person name="Hauser L."/>
            <person name="Kyrpides N."/>
            <person name="Mikhailova N."/>
            <person name="Nelson K."/>
            <person name="Gogarten J.P."/>
            <person name="Noll K."/>
            <person name="Richardson P."/>
        </authorList>
    </citation>
    <scope>NUCLEOTIDE SEQUENCE [LARGE SCALE GENOMIC DNA]</scope>
    <source>
        <strain>ATCC BAA-301 / DSM 14385 / NBRC 107922 / TMO</strain>
    </source>
</reference>
<comment type="function">
    <text evidence="1">An accessory protein needed during the final step in the assembly of 30S ribosomal subunit, possibly for assembly of the head region. Essential for efficient processing of 16S rRNA. May be needed both before and after RbfA during the maturation of 16S rRNA. It has affinity for free ribosomal 30S subunits but not for 70S ribosomes.</text>
</comment>
<comment type="subunit">
    <text evidence="1">Binds ribosomal protein uS19.</text>
</comment>
<comment type="subcellular location">
    <subcellularLocation>
        <location evidence="1">Cytoplasm</location>
    </subcellularLocation>
</comment>
<comment type="domain">
    <text evidence="1">The PRC barrel domain binds ribosomal protein uS19.</text>
</comment>
<comment type="similarity">
    <text evidence="1">Belongs to the RimM family.</text>
</comment>
<proteinExistence type="inferred from homology"/>
<protein>
    <recommendedName>
        <fullName evidence="1">Ribosome maturation factor RimM</fullName>
    </recommendedName>
</protein>
<evidence type="ECO:0000255" key="1">
    <source>
        <dbReference type="HAMAP-Rule" id="MF_00014"/>
    </source>
</evidence>
<dbReference type="EMBL" id="CP000812">
    <property type="protein sequence ID" value="ABV32696.1"/>
    <property type="molecule type" value="Genomic_DNA"/>
</dbReference>
<dbReference type="RefSeq" id="WP_012002177.1">
    <property type="nucleotide sequence ID" value="NZ_BSDV01000001.1"/>
</dbReference>
<dbReference type="SMR" id="A8F3G2"/>
<dbReference type="STRING" id="416591.Tlet_0126"/>
<dbReference type="KEGG" id="tle:Tlet_0126"/>
<dbReference type="eggNOG" id="COG0806">
    <property type="taxonomic scope" value="Bacteria"/>
</dbReference>
<dbReference type="HOGENOM" id="CLU_077636_3_2_0"/>
<dbReference type="OrthoDB" id="9810331at2"/>
<dbReference type="Proteomes" id="UP000002016">
    <property type="component" value="Chromosome"/>
</dbReference>
<dbReference type="GO" id="GO:0005737">
    <property type="term" value="C:cytoplasm"/>
    <property type="evidence" value="ECO:0007669"/>
    <property type="project" value="UniProtKB-SubCell"/>
</dbReference>
<dbReference type="GO" id="GO:0005840">
    <property type="term" value="C:ribosome"/>
    <property type="evidence" value="ECO:0007669"/>
    <property type="project" value="InterPro"/>
</dbReference>
<dbReference type="GO" id="GO:0043022">
    <property type="term" value="F:ribosome binding"/>
    <property type="evidence" value="ECO:0007669"/>
    <property type="project" value="InterPro"/>
</dbReference>
<dbReference type="GO" id="GO:0042274">
    <property type="term" value="P:ribosomal small subunit biogenesis"/>
    <property type="evidence" value="ECO:0007669"/>
    <property type="project" value="UniProtKB-UniRule"/>
</dbReference>
<dbReference type="GO" id="GO:0006364">
    <property type="term" value="P:rRNA processing"/>
    <property type="evidence" value="ECO:0007669"/>
    <property type="project" value="UniProtKB-UniRule"/>
</dbReference>
<dbReference type="Gene3D" id="2.30.30.240">
    <property type="entry name" value="PRC-barrel domain"/>
    <property type="match status" value="1"/>
</dbReference>
<dbReference type="Gene3D" id="2.40.30.60">
    <property type="entry name" value="RimM"/>
    <property type="match status" value="1"/>
</dbReference>
<dbReference type="HAMAP" id="MF_00014">
    <property type="entry name" value="Ribosome_mat_RimM"/>
    <property type="match status" value="1"/>
</dbReference>
<dbReference type="InterPro" id="IPR011033">
    <property type="entry name" value="PRC_barrel-like_sf"/>
</dbReference>
<dbReference type="InterPro" id="IPR056792">
    <property type="entry name" value="PRC_RimM"/>
</dbReference>
<dbReference type="InterPro" id="IPR011961">
    <property type="entry name" value="RimM"/>
</dbReference>
<dbReference type="InterPro" id="IPR002676">
    <property type="entry name" value="RimM_N"/>
</dbReference>
<dbReference type="InterPro" id="IPR036976">
    <property type="entry name" value="RimM_N_sf"/>
</dbReference>
<dbReference type="InterPro" id="IPR009000">
    <property type="entry name" value="Transl_B-barrel_sf"/>
</dbReference>
<dbReference type="NCBIfam" id="TIGR02273">
    <property type="entry name" value="16S_RimM"/>
    <property type="match status" value="1"/>
</dbReference>
<dbReference type="PANTHER" id="PTHR33692">
    <property type="entry name" value="RIBOSOME MATURATION FACTOR RIMM"/>
    <property type="match status" value="1"/>
</dbReference>
<dbReference type="PANTHER" id="PTHR33692:SF1">
    <property type="entry name" value="RIBOSOME MATURATION FACTOR RIMM"/>
    <property type="match status" value="1"/>
</dbReference>
<dbReference type="Pfam" id="PF24986">
    <property type="entry name" value="PRC_RimM"/>
    <property type="match status" value="1"/>
</dbReference>
<dbReference type="Pfam" id="PF01782">
    <property type="entry name" value="RimM"/>
    <property type="match status" value="1"/>
</dbReference>
<dbReference type="SUPFAM" id="SSF50346">
    <property type="entry name" value="PRC-barrel domain"/>
    <property type="match status" value="1"/>
</dbReference>
<dbReference type="SUPFAM" id="SSF50447">
    <property type="entry name" value="Translation proteins"/>
    <property type="match status" value="1"/>
</dbReference>
<organism>
    <name type="scientific">Pseudothermotoga lettingae (strain ATCC BAA-301 / DSM 14385 / NBRC 107922 / TMO)</name>
    <name type="common">Thermotoga lettingae</name>
    <dbReference type="NCBI Taxonomy" id="416591"/>
    <lineage>
        <taxon>Bacteria</taxon>
        <taxon>Thermotogati</taxon>
        <taxon>Thermotogota</taxon>
        <taxon>Thermotogae</taxon>
        <taxon>Thermotogales</taxon>
        <taxon>Thermotogaceae</taxon>
        <taxon>Pseudothermotoga</taxon>
    </lineage>
</organism>
<sequence>MSDYVVIGKITKTHGLFGSVKVLPLTNALEVFQKLENVFIKNDAQSNTHRLQIEEIRKAGKGFLIKFSGIDDEERARKIVGLSLAVRVTDLPKPKSPNEYYYYELLNVEVLDQSGNFIGRVEDIIQTGSNEVAVVKNGSFEMLIPVIHDYIIKFEKRKRLVVKVPEWI</sequence>
<keyword id="KW-0143">Chaperone</keyword>
<keyword id="KW-0963">Cytoplasm</keyword>
<keyword id="KW-1185">Reference proteome</keyword>
<keyword id="KW-0690">Ribosome biogenesis</keyword>
<keyword id="KW-0698">rRNA processing</keyword>